<keyword id="KW-0963">Cytoplasm</keyword>
<keyword id="KW-0690">Ribosome biogenesis</keyword>
<organism>
    <name type="scientific">Prochlorococcus marinus (strain MIT 9312)</name>
    <dbReference type="NCBI Taxonomy" id="74546"/>
    <lineage>
        <taxon>Bacteria</taxon>
        <taxon>Bacillati</taxon>
        <taxon>Cyanobacteriota</taxon>
        <taxon>Cyanophyceae</taxon>
        <taxon>Synechococcales</taxon>
        <taxon>Prochlorococcaceae</taxon>
        <taxon>Prochlorococcus</taxon>
    </lineage>
</organism>
<name>RBFA_PROM9</name>
<sequence length="130" mass="15073">MPNNFRLAKVSSLLKKEITLILQNDLENDLIRDYFVNISKIDLSGDLQHCKIYITSTAKETVRKEIVANLNTAKSFIRNNLGKRIEMRRVPEIIFKEDIVLDKGLSVLKLLDELKNKHQDKNYEDKDANS</sequence>
<dbReference type="EMBL" id="CP000111">
    <property type="protein sequence ID" value="ABB49177.1"/>
    <property type="molecule type" value="Genomic_DNA"/>
</dbReference>
<dbReference type="RefSeq" id="WP_011375681.1">
    <property type="nucleotide sequence ID" value="NC_007577.1"/>
</dbReference>
<dbReference type="SMR" id="Q31D68"/>
<dbReference type="STRING" id="74546.PMT9312_0115"/>
<dbReference type="KEGG" id="pmi:PMT9312_0115"/>
<dbReference type="eggNOG" id="COG0858">
    <property type="taxonomic scope" value="Bacteria"/>
</dbReference>
<dbReference type="HOGENOM" id="CLU_089475_2_1_3"/>
<dbReference type="OrthoDB" id="307788at2"/>
<dbReference type="Proteomes" id="UP000002715">
    <property type="component" value="Chromosome"/>
</dbReference>
<dbReference type="GO" id="GO:0005829">
    <property type="term" value="C:cytosol"/>
    <property type="evidence" value="ECO:0007669"/>
    <property type="project" value="TreeGrafter"/>
</dbReference>
<dbReference type="GO" id="GO:0043024">
    <property type="term" value="F:ribosomal small subunit binding"/>
    <property type="evidence" value="ECO:0007669"/>
    <property type="project" value="TreeGrafter"/>
</dbReference>
<dbReference type="GO" id="GO:0030490">
    <property type="term" value="P:maturation of SSU-rRNA"/>
    <property type="evidence" value="ECO:0007669"/>
    <property type="project" value="UniProtKB-UniRule"/>
</dbReference>
<dbReference type="Gene3D" id="3.30.300.20">
    <property type="match status" value="1"/>
</dbReference>
<dbReference type="HAMAP" id="MF_00003">
    <property type="entry name" value="RbfA"/>
    <property type="match status" value="1"/>
</dbReference>
<dbReference type="InterPro" id="IPR015946">
    <property type="entry name" value="KH_dom-like_a/b"/>
</dbReference>
<dbReference type="InterPro" id="IPR000238">
    <property type="entry name" value="RbfA"/>
</dbReference>
<dbReference type="InterPro" id="IPR023799">
    <property type="entry name" value="RbfA_dom_sf"/>
</dbReference>
<dbReference type="InterPro" id="IPR020053">
    <property type="entry name" value="Ribosome-bd_factorA_CS"/>
</dbReference>
<dbReference type="NCBIfam" id="TIGR00082">
    <property type="entry name" value="rbfA"/>
    <property type="match status" value="1"/>
</dbReference>
<dbReference type="PANTHER" id="PTHR33515">
    <property type="entry name" value="RIBOSOME-BINDING FACTOR A, CHLOROPLASTIC-RELATED"/>
    <property type="match status" value="1"/>
</dbReference>
<dbReference type="PANTHER" id="PTHR33515:SF1">
    <property type="entry name" value="RIBOSOME-BINDING FACTOR A, CHLOROPLASTIC-RELATED"/>
    <property type="match status" value="1"/>
</dbReference>
<dbReference type="Pfam" id="PF02033">
    <property type="entry name" value="RBFA"/>
    <property type="match status" value="1"/>
</dbReference>
<dbReference type="SUPFAM" id="SSF89919">
    <property type="entry name" value="Ribosome-binding factor A, RbfA"/>
    <property type="match status" value="1"/>
</dbReference>
<dbReference type="PROSITE" id="PS01319">
    <property type="entry name" value="RBFA"/>
    <property type="match status" value="1"/>
</dbReference>
<protein>
    <recommendedName>
        <fullName evidence="1">Ribosome-binding factor A</fullName>
    </recommendedName>
</protein>
<reference key="1">
    <citation type="journal article" date="2006" name="Science">
        <title>Genomic islands and the ecology and evolution of Prochlorococcus.</title>
        <authorList>
            <person name="Coleman M.L."/>
            <person name="Sullivan M.B."/>
            <person name="Martiny A.C."/>
            <person name="Steglich C."/>
            <person name="Barry K."/>
            <person name="Delong E.F."/>
            <person name="Chisholm S.W."/>
        </authorList>
    </citation>
    <scope>NUCLEOTIDE SEQUENCE [LARGE SCALE GENOMIC DNA]</scope>
    <source>
        <strain>MIT 9312</strain>
    </source>
</reference>
<accession>Q31D68</accession>
<feature type="chain" id="PRO_1000000168" description="Ribosome-binding factor A">
    <location>
        <begin position="1"/>
        <end position="130"/>
    </location>
</feature>
<evidence type="ECO:0000255" key="1">
    <source>
        <dbReference type="HAMAP-Rule" id="MF_00003"/>
    </source>
</evidence>
<gene>
    <name evidence="1" type="primary">rbfA</name>
    <name type="ordered locus">PMT9312_0115</name>
</gene>
<proteinExistence type="inferred from homology"/>
<comment type="function">
    <text evidence="1">One of several proteins that assist in the late maturation steps of the functional core of the 30S ribosomal subunit. Associates with free 30S ribosomal subunits (but not with 30S subunits that are part of 70S ribosomes or polysomes). Required for efficient processing of 16S rRNA. May interact with the 5'-terminal helix region of 16S rRNA.</text>
</comment>
<comment type="subunit">
    <text evidence="1">Monomer. Binds 30S ribosomal subunits, but not 50S ribosomal subunits or 70S ribosomes.</text>
</comment>
<comment type="subcellular location">
    <subcellularLocation>
        <location evidence="1">Cytoplasm</location>
    </subcellularLocation>
</comment>
<comment type="similarity">
    <text evidence="1">Belongs to the RbfA family.</text>
</comment>